<dbReference type="EC" id="5.3.1.16" evidence="1"/>
<dbReference type="EMBL" id="CP001322">
    <property type="protein sequence ID" value="ACL04768.1"/>
    <property type="molecule type" value="Genomic_DNA"/>
</dbReference>
<dbReference type="RefSeq" id="WP_015947828.1">
    <property type="nucleotide sequence ID" value="NC_011768.1"/>
</dbReference>
<dbReference type="SMR" id="B8FBL5"/>
<dbReference type="KEGG" id="dal:Dalk_3078"/>
<dbReference type="eggNOG" id="COG0106">
    <property type="taxonomic scope" value="Bacteria"/>
</dbReference>
<dbReference type="HOGENOM" id="CLU_048577_1_1_7"/>
<dbReference type="UniPathway" id="UPA00031">
    <property type="reaction ID" value="UER00009"/>
</dbReference>
<dbReference type="Proteomes" id="UP000000739">
    <property type="component" value="Chromosome"/>
</dbReference>
<dbReference type="GO" id="GO:0005737">
    <property type="term" value="C:cytoplasm"/>
    <property type="evidence" value="ECO:0007669"/>
    <property type="project" value="UniProtKB-SubCell"/>
</dbReference>
<dbReference type="GO" id="GO:0003949">
    <property type="term" value="F:1-(5-phosphoribosyl)-5-[(5-phosphoribosylamino)methylideneamino]imidazole-4-carboxamide isomerase activity"/>
    <property type="evidence" value="ECO:0007669"/>
    <property type="project" value="UniProtKB-UniRule"/>
</dbReference>
<dbReference type="GO" id="GO:0000105">
    <property type="term" value="P:L-histidine biosynthetic process"/>
    <property type="evidence" value="ECO:0007669"/>
    <property type="project" value="UniProtKB-UniRule"/>
</dbReference>
<dbReference type="GO" id="GO:0000162">
    <property type="term" value="P:L-tryptophan biosynthetic process"/>
    <property type="evidence" value="ECO:0007669"/>
    <property type="project" value="TreeGrafter"/>
</dbReference>
<dbReference type="CDD" id="cd04732">
    <property type="entry name" value="HisA"/>
    <property type="match status" value="1"/>
</dbReference>
<dbReference type="FunFam" id="3.20.20.70:FF:000009">
    <property type="entry name" value="1-(5-phosphoribosyl)-5-[(5-phosphoribosylamino)methylideneamino] imidazole-4-carboxamide isomerase"/>
    <property type="match status" value="1"/>
</dbReference>
<dbReference type="Gene3D" id="3.20.20.70">
    <property type="entry name" value="Aldolase class I"/>
    <property type="match status" value="1"/>
</dbReference>
<dbReference type="HAMAP" id="MF_01014">
    <property type="entry name" value="HisA"/>
    <property type="match status" value="1"/>
</dbReference>
<dbReference type="InterPro" id="IPR013785">
    <property type="entry name" value="Aldolase_TIM"/>
</dbReference>
<dbReference type="InterPro" id="IPR006062">
    <property type="entry name" value="His_biosynth"/>
</dbReference>
<dbReference type="InterPro" id="IPR006063">
    <property type="entry name" value="HisA_bact_arch"/>
</dbReference>
<dbReference type="InterPro" id="IPR044524">
    <property type="entry name" value="Isoase_HisA-like"/>
</dbReference>
<dbReference type="InterPro" id="IPR023016">
    <property type="entry name" value="Isoase_HisA-like_bact"/>
</dbReference>
<dbReference type="InterPro" id="IPR011060">
    <property type="entry name" value="RibuloseP-bd_barrel"/>
</dbReference>
<dbReference type="NCBIfam" id="TIGR00007">
    <property type="entry name" value="1-(5-phosphoribosyl)-5-[(5-phosphoribosylamino)methylideneamino]imidazole-4-carboxamide isomerase"/>
    <property type="match status" value="1"/>
</dbReference>
<dbReference type="NCBIfam" id="NF010112">
    <property type="entry name" value="PRK13585.1"/>
    <property type="match status" value="1"/>
</dbReference>
<dbReference type="PANTHER" id="PTHR43090">
    <property type="entry name" value="1-(5-PHOSPHORIBOSYL)-5-[(5-PHOSPHORIBOSYLAMINO)METHYLIDENEAMINO] IMIDAZOLE-4-CARBOXAMIDE ISOMERASE"/>
    <property type="match status" value="1"/>
</dbReference>
<dbReference type="PANTHER" id="PTHR43090:SF2">
    <property type="entry name" value="1-(5-PHOSPHORIBOSYL)-5-[(5-PHOSPHORIBOSYLAMINO)METHYLIDENEAMINO] IMIDAZOLE-4-CARBOXAMIDE ISOMERASE"/>
    <property type="match status" value="1"/>
</dbReference>
<dbReference type="Pfam" id="PF00977">
    <property type="entry name" value="His_biosynth"/>
    <property type="match status" value="1"/>
</dbReference>
<dbReference type="SUPFAM" id="SSF51366">
    <property type="entry name" value="Ribulose-phoshate binding barrel"/>
    <property type="match status" value="1"/>
</dbReference>
<feature type="chain" id="PRO_1000135102" description="1-(5-phosphoribosyl)-5-[(5-phosphoribosylamino)methylideneamino] imidazole-4-carboxamide isomerase">
    <location>
        <begin position="1"/>
        <end position="250"/>
    </location>
</feature>
<feature type="active site" description="Proton acceptor" evidence="1">
    <location>
        <position position="8"/>
    </location>
</feature>
<feature type="active site" description="Proton donor" evidence="1">
    <location>
        <position position="129"/>
    </location>
</feature>
<sequence>MIVIPAVDIRQGKCVRLSQGRADAQTVYSDDPAAMAAKWEGMGAARIHVVDLDGAFEKTPKNLGAIKKILETVKKPVQVGGGIRDLATMETYLDLGVSNIIIGTEAIRNPEMVKDACKRFPGKIIVGIDAKEGMVAVEGWTETTSVRAVDLARSFEDAGVAAINFTDIHRDGMQTGPNIEQTRAFAQAISIPVVASGGVSTIKDIKAVKTLAKDGVVGVITGRALYVGTLDLAEAVSEAMEGVDPDYNPF</sequence>
<gene>
    <name evidence="1" type="primary">hisA</name>
    <name type="ordered locus">Dalk_3078</name>
</gene>
<name>HIS4_DESAL</name>
<organism>
    <name type="scientific">Desulfatibacillum aliphaticivorans</name>
    <dbReference type="NCBI Taxonomy" id="218208"/>
    <lineage>
        <taxon>Bacteria</taxon>
        <taxon>Pseudomonadati</taxon>
        <taxon>Thermodesulfobacteriota</taxon>
        <taxon>Desulfobacteria</taxon>
        <taxon>Desulfobacterales</taxon>
        <taxon>Desulfatibacillaceae</taxon>
        <taxon>Desulfatibacillum</taxon>
    </lineage>
</organism>
<accession>B8FBL5</accession>
<proteinExistence type="inferred from homology"/>
<keyword id="KW-0028">Amino-acid biosynthesis</keyword>
<keyword id="KW-0963">Cytoplasm</keyword>
<keyword id="KW-0368">Histidine biosynthesis</keyword>
<keyword id="KW-0413">Isomerase</keyword>
<keyword id="KW-1185">Reference proteome</keyword>
<protein>
    <recommendedName>
        <fullName evidence="1">1-(5-phosphoribosyl)-5-[(5-phosphoribosylamino)methylideneamino] imidazole-4-carboxamide isomerase</fullName>
        <ecNumber evidence="1">5.3.1.16</ecNumber>
    </recommendedName>
    <alternativeName>
        <fullName evidence="1">Phosphoribosylformimino-5-aminoimidazole carboxamide ribotide isomerase</fullName>
    </alternativeName>
</protein>
<reference key="1">
    <citation type="journal article" date="2012" name="Environ. Microbiol.">
        <title>The genome sequence of Desulfatibacillum alkenivorans AK-01: a blueprint for anaerobic alkane oxidation.</title>
        <authorList>
            <person name="Callaghan A.V."/>
            <person name="Morris B.E."/>
            <person name="Pereira I.A."/>
            <person name="McInerney M.J."/>
            <person name="Austin R.N."/>
            <person name="Groves J.T."/>
            <person name="Kukor J.J."/>
            <person name="Suflita J.M."/>
            <person name="Young L.Y."/>
            <person name="Zylstra G.J."/>
            <person name="Wawrik B."/>
        </authorList>
    </citation>
    <scope>NUCLEOTIDE SEQUENCE [LARGE SCALE GENOMIC DNA]</scope>
    <source>
        <strain>AK-01</strain>
    </source>
</reference>
<evidence type="ECO:0000255" key="1">
    <source>
        <dbReference type="HAMAP-Rule" id="MF_01014"/>
    </source>
</evidence>
<comment type="catalytic activity">
    <reaction evidence="1">
        <text>1-(5-phospho-beta-D-ribosyl)-5-[(5-phospho-beta-D-ribosylamino)methylideneamino]imidazole-4-carboxamide = 5-[(5-phospho-1-deoxy-D-ribulos-1-ylimino)methylamino]-1-(5-phospho-beta-D-ribosyl)imidazole-4-carboxamide</text>
        <dbReference type="Rhea" id="RHEA:15469"/>
        <dbReference type="ChEBI" id="CHEBI:58435"/>
        <dbReference type="ChEBI" id="CHEBI:58525"/>
        <dbReference type="EC" id="5.3.1.16"/>
    </reaction>
</comment>
<comment type="pathway">
    <text evidence="1">Amino-acid biosynthesis; L-histidine biosynthesis; L-histidine from 5-phospho-alpha-D-ribose 1-diphosphate: step 4/9.</text>
</comment>
<comment type="subcellular location">
    <subcellularLocation>
        <location evidence="1">Cytoplasm</location>
    </subcellularLocation>
</comment>
<comment type="similarity">
    <text evidence="1">Belongs to the HisA/HisF family.</text>
</comment>